<sequence length="445" mass="46303">MSAPAAPIPLESRASGPLSGTLRVPGDKSISHRALILGALSVGETRISGLLEGEDVLNTAQAMRALGAKVERHGDFAWTVHGVGVGGFAQPAATLDFGNSGTGCRLVMGAVAGCPITAVFDGDASLRSRPMRRILDPLELIGAKVTASAEGGKLPLTLQGASNPVPVVYRTPVASAQIKSAVLLAGLAAPGVTTVIEQEASRDHTELMLKHFGAEIVTTLEGTHGRRIALTGQPELHGAPVIVPADPSSAAFPLVAALIVDGSDLVLSDVMTNPLRTGLFATLREMGASIEEDDVRGDAGEPMVRLRVRASKLRGVEVPPERAPSMIDEYLVLAVAAAYAEGTTIMRGLHELRVKESDRLEATAAMLRVNGVKVEISDDDLIVEGRGHVPGGGLVATHMDHRIAMSALVMGLASDKPVKVDDTAFIATSFPDFVPLMCKAGADFA</sequence>
<protein>
    <recommendedName>
        <fullName evidence="1">3-phosphoshikimate 1-carboxyvinyltransferase</fullName>
        <ecNumber evidence="1">2.5.1.19</ecNumber>
    </recommendedName>
    <alternativeName>
        <fullName evidence="1">5-enolpyruvylshikimate-3-phosphate synthase</fullName>
        <shortName evidence="1">EPSP synthase</shortName>
        <shortName evidence="1">EPSPS</shortName>
    </alternativeName>
</protein>
<name>AROA_BRASB</name>
<reference key="1">
    <citation type="journal article" date="2007" name="Science">
        <title>Legumes symbioses: absence of nod genes in photosynthetic bradyrhizobia.</title>
        <authorList>
            <person name="Giraud E."/>
            <person name="Moulin L."/>
            <person name="Vallenet D."/>
            <person name="Barbe V."/>
            <person name="Cytryn E."/>
            <person name="Avarre J.-C."/>
            <person name="Jaubert M."/>
            <person name="Simon D."/>
            <person name="Cartieaux F."/>
            <person name="Prin Y."/>
            <person name="Bena G."/>
            <person name="Hannibal L."/>
            <person name="Fardoux J."/>
            <person name="Kojadinovic M."/>
            <person name="Vuillet L."/>
            <person name="Lajus A."/>
            <person name="Cruveiller S."/>
            <person name="Rouy Z."/>
            <person name="Mangenot S."/>
            <person name="Segurens B."/>
            <person name="Dossat C."/>
            <person name="Franck W.L."/>
            <person name="Chang W.-S."/>
            <person name="Saunders E."/>
            <person name="Bruce D."/>
            <person name="Richardson P."/>
            <person name="Normand P."/>
            <person name="Dreyfus B."/>
            <person name="Pignol D."/>
            <person name="Stacey G."/>
            <person name="Emerich D."/>
            <person name="Vermeglio A."/>
            <person name="Medigue C."/>
            <person name="Sadowsky M."/>
        </authorList>
    </citation>
    <scope>NUCLEOTIDE SEQUENCE [LARGE SCALE GENOMIC DNA]</scope>
    <source>
        <strain>BTAi1 / ATCC BAA-1182</strain>
    </source>
</reference>
<comment type="function">
    <text evidence="1">Catalyzes the transfer of the enolpyruvyl moiety of phosphoenolpyruvate (PEP) to the 5-hydroxyl of shikimate-3-phosphate (S3P) to produce enolpyruvyl shikimate-3-phosphate and inorganic phosphate.</text>
</comment>
<comment type="catalytic activity">
    <reaction evidence="1">
        <text>3-phosphoshikimate + phosphoenolpyruvate = 5-O-(1-carboxyvinyl)-3-phosphoshikimate + phosphate</text>
        <dbReference type="Rhea" id="RHEA:21256"/>
        <dbReference type="ChEBI" id="CHEBI:43474"/>
        <dbReference type="ChEBI" id="CHEBI:57701"/>
        <dbReference type="ChEBI" id="CHEBI:58702"/>
        <dbReference type="ChEBI" id="CHEBI:145989"/>
        <dbReference type="EC" id="2.5.1.19"/>
    </reaction>
    <physiologicalReaction direction="left-to-right" evidence="1">
        <dbReference type="Rhea" id="RHEA:21257"/>
    </physiologicalReaction>
</comment>
<comment type="pathway">
    <text evidence="1">Metabolic intermediate biosynthesis; chorismate biosynthesis; chorismate from D-erythrose 4-phosphate and phosphoenolpyruvate: step 6/7.</text>
</comment>
<comment type="subunit">
    <text evidence="1">Monomer.</text>
</comment>
<comment type="subcellular location">
    <subcellularLocation>
        <location evidence="1">Cytoplasm</location>
    </subcellularLocation>
</comment>
<comment type="similarity">
    <text evidence="1">Belongs to the EPSP synthase family.</text>
</comment>
<gene>
    <name evidence="1" type="primary">aroA</name>
    <name type="ordered locus">BBta_0105</name>
</gene>
<evidence type="ECO:0000255" key="1">
    <source>
        <dbReference type="HAMAP-Rule" id="MF_00210"/>
    </source>
</evidence>
<organism>
    <name type="scientific">Bradyrhizobium sp. (strain BTAi1 / ATCC BAA-1182)</name>
    <dbReference type="NCBI Taxonomy" id="288000"/>
    <lineage>
        <taxon>Bacteria</taxon>
        <taxon>Pseudomonadati</taxon>
        <taxon>Pseudomonadota</taxon>
        <taxon>Alphaproteobacteria</taxon>
        <taxon>Hyphomicrobiales</taxon>
        <taxon>Nitrobacteraceae</taxon>
        <taxon>Bradyrhizobium</taxon>
    </lineage>
</organism>
<accession>A5E8B1</accession>
<keyword id="KW-0028">Amino-acid biosynthesis</keyword>
<keyword id="KW-0057">Aromatic amino acid biosynthesis</keyword>
<keyword id="KW-0963">Cytoplasm</keyword>
<keyword id="KW-1185">Reference proteome</keyword>
<keyword id="KW-0808">Transferase</keyword>
<proteinExistence type="inferred from homology"/>
<feature type="chain" id="PRO_0000325336" description="3-phosphoshikimate 1-carboxyvinyltransferase">
    <location>
        <begin position="1"/>
        <end position="445"/>
    </location>
</feature>
<feature type="active site" description="Proton acceptor" evidence="1">
    <location>
        <position position="328"/>
    </location>
</feature>
<feature type="binding site" evidence="1">
    <location>
        <position position="28"/>
    </location>
    <ligand>
        <name>3-phosphoshikimate</name>
        <dbReference type="ChEBI" id="CHEBI:145989"/>
    </ligand>
</feature>
<feature type="binding site" evidence="1">
    <location>
        <position position="28"/>
    </location>
    <ligand>
        <name>phosphoenolpyruvate</name>
        <dbReference type="ChEBI" id="CHEBI:58702"/>
    </ligand>
</feature>
<feature type="binding site" evidence="1">
    <location>
        <position position="29"/>
    </location>
    <ligand>
        <name>3-phosphoshikimate</name>
        <dbReference type="ChEBI" id="CHEBI:145989"/>
    </ligand>
</feature>
<feature type="binding site" evidence="1">
    <location>
        <position position="33"/>
    </location>
    <ligand>
        <name>3-phosphoshikimate</name>
        <dbReference type="ChEBI" id="CHEBI:145989"/>
    </ligand>
</feature>
<feature type="binding site" evidence="1">
    <location>
        <position position="101"/>
    </location>
    <ligand>
        <name>phosphoenolpyruvate</name>
        <dbReference type="ChEBI" id="CHEBI:58702"/>
    </ligand>
</feature>
<feature type="binding site" evidence="1">
    <location>
        <position position="129"/>
    </location>
    <ligand>
        <name>phosphoenolpyruvate</name>
        <dbReference type="ChEBI" id="CHEBI:58702"/>
    </ligand>
</feature>
<feature type="binding site" evidence="1">
    <location>
        <position position="175"/>
    </location>
    <ligand>
        <name>3-phosphoshikimate</name>
        <dbReference type="ChEBI" id="CHEBI:145989"/>
    </ligand>
</feature>
<feature type="binding site" evidence="1">
    <location>
        <position position="177"/>
    </location>
    <ligand>
        <name>3-phosphoshikimate</name>
        <dbReference type="ChEBI" id="CHEBI:145989"/>
    </ligand>
</feature>
<feature type="binding site" evidence="1">
    <location>
        <position position="177"/>
    </location>
    <ligand>
        <name>phosphoenolpyruvate</name>
        <dbReference type="ChEBI" id="CHEBI:58702"/>
    </ligand>
</feature>
<feature type="binding site" evidence="1">
    <location>
        <position position="328"/>
    </location>
    <ligand>
        <name>3-phosphoshikimate</name>
        <dbReference type="ChEBI" id="CHEBI:145989"/>
    </ligand>
</feature>
<feature type="binding site" evidence="1">
    <location>
        <position position="355"/>
    </location>
    <ligand>
        <name>3-phosphoshikimate</name>
        <dbReference type="ChEBI" id="CHEBI:145989"/>
    </ligand>
</feature>
<feature type="binding site" evidence="1">
    <location>
        <position position="359"/>
    </location>
    <ligand>
        <name>phosphoenolpyruvate</name>
        <dbReference type="ChEBI" id="CHEBI:58702"/>
    </ligand>
</feature>
<feature type="binding site" evidence="1">
    <location>
        <position position="402"/>
    </location>
    <ligand>
        <name>phosphoenolpyruvate</name>
        <dbReference type="ChEBI" id="CHEBI:58702"/>
    </ligand>
</feature>
<dbReference type="EC" id="2.5.1.19" evidence="1"/>
<dbReference type="EMBL" id="CP000494">
    <property type="protein sequence ID" value="ABQ32405.1"/>
    <property type="molecule type" value="Genomic_DNA"/>
</dbReference>
<dbReference type="RefSeq" id="WP_011942628.1">
    <property type="nucleotide sequence ID" value="NC_009485.1"/>
</dbReference>
<dbReference type="SMR" id="A5E8B1"/>
<dbReference type="STRING" id="288000.BBta_0105"/>
<dbReference type="KEGG" id="bbt:BBta_0105"/>
<dbReference type="eggNOG" id="COG0128">
    <property type="taxonomic scope" value="Bacteria"/>
</dbReference>
<dbReference type="HOGENOM" id="CLU_024321_0_1_5"/>
<dbReference type="OrthoDB" id="9809920at2"/>
<dbReference type="UniPathway" id="UPA00053">
    <property type="reaction ID" value="UER00089"/>
</dbReference>
<dbReference type="Proteomes" id="UP000000246">
    <property type="component" value="Chromosome"/>
</dbReference>
<dbReference type="GO" id="GO:0005737">
    <property type="term" value="C:cytoplasm"/>
    <property type="evidence" value="ECO:0007669"/>
    <property type="project" value="UniProtKB-SubCell"/>
</dbReference>
<dbReference type="GO" id="GO:0003866">
    <property type="term" value="F:3-phosphoshikimate 1-carboxyvinyltransferase activity"/>
    <property type="evidence" value="ECO:0007669"/>
    <property type="project" value="UniProtKB-UniRule"/>
</dbReference>
<dbReference type="GO" id="GO:0008652">
    <property type="term" value="P:amino acid biosynthetic process"/>
    <property type="evidence" value="ECO:0007669"/>
    <property type="project" value="UniProtKB-KW"/>
</dbReference>
<dbReference type="GO" id="GO:0009073">
    <property type="term" value="P:aromatic amino acid family biosynthetic process"/>
    <property type="evidence" value="ECO:0007669"/>
    <property type="project" value="UniProtKB-KW"/>
</dbReference>
<dbReference type="GO" id="GO:0009423">
    <property type="term" value="P:chorismate biosynthetic process"/>
    <property type="evidence" value="ECO:0007669"/>
    <property type="project" value="UniProtKB-UniRule"/>
</dbReference>
<dbReference type="CDD" id="cd01556">
    <property type="entry name" value="EPSP_synthase"/>
    <property type="match status" value="1"/>
</dbReference>
<dbReference type="FunFam" id="3.65.10.10:FF:000005">
    <property type="entry name" value="3-phosphoshikimate 1-carboxyvinyltransferase"/>
    <property type="match status" value="1"/>
</dbReference>
<dbReference type="FunFam" id="3.65.10.10:FF:000006">
    <property type="entry name" value="3-phosphoshikimate 1-carboxyvinyltransferase"/>
    <property type="match status" value="1"/>
</dbReference>
<dbReference type="Gene3D" id="3.65.10.10">
    <property type="entry name" value="Enolpyruvate transferase domain"/>
    <property type="match status" value="2"/>
</dbReference>
<dbReference type="HAMAP" id="MF_00210">
    <property type="entry name" value="EPSP_synth"/>
    <property type="match status" value="1"/>
</dbReference>
<dbReference type="InterPro" id="IPR001986">
    <property type="entry name" value="Enolpyruvate_Tfrase_dom"/>
</dbReference>
<dbReference type="InterPro" id="IPR036968">
    <property type="entry name" value="Enolpyruvate_Tfrase_sf"/>
</dbReference>
<dbReference type="InterPro" id="IPR006264">
    <property type="entry name" value="EPSP_synthase"/>
</dbReference>
<dbReference type="InterPro" id="IPR023193">
    <property type="entry name" value="EPSP_synthase_CS"/>
</dbReference>
<dbReference type="InterPro" id="IPR013792">
    <property type="entry name" value="RNA3'P_cycl/enolpyr_Trfase_a/b"/>
</dbReference>
<dbReference type="NCBIfam" id="TIGR01356">
    <property type="entry name" value="aroA"/>
    <property type="match status" value="1"/>
</dbReference>
<dbReference type="PANTHER" id="PTHR21090">
    <property type="entry name" value="AROM/DEHYDROQUINATE SYNTHASE"/>
    <property type="match status" value="1"/>
</dbReference>
<dbReference type="PANTHER" id="PTHR21090:SF5">
    <property type="entry name" value="PENTAFUNCTIONAL AROM POLYPEPTIDE"/>
    <property type="match status" value="1"/>
</dbReference>
<dbReference type="Pfam" id="PF00275">
    <property type="entry name" value="EPSP_synthase"/>
    <property type="match status" value="1"/>
</dbReference>
<dbReference type="PIRSF" id="PIRSF000505">
    <property type="entry name" value="EPSPS"/>
    <property type="match status" value="1"/>
</dbReference>
<dbReference type="SUPFAM" id="SSF55205">
    <property type="entry name" value="EPT/RTPC-like"/>
    <property type="match status" value="1"/>
</dbReference>
<dbReference type="PROSITE" id="PS00104">
    <property type="entry name" value="EPSP_SYNTHASE_1"/>
    <property type="match status" value="1"/>
</dbReference>
<dbReference type="PROSITE" id="PS00885">
    <property type="entry name" value="EPSP_SYNTHASE_2"/>
    <property type="match status" value="1"/>
</dbReference>